<evidence type="ECO:0000250" key="1">
    <source>
        <dbReference type="UniProtKB" id="P0C5I2"/>
    </source>
</evidence>
<evidence type="ECO:0000250" key="2">
    <source>
        <dbReference type="UniProtKB" id="Q9Y5P6"/>
    </source>
</evidence>
<evidence type="ECO:0000305" key="3"/>
<evidence type="ECO:0000312" key="4">
    <source>
        <dbReference type="MGI" id="MGI:2660880"/>
    </source>
</evidence>
<evidence type="ECO:0000312" key="5">
    <source>
        <dbReference type="Proteomes" id="UP000000589"/>
    </source>
</evidence>
<keyword id="KW-0963">Cytoplasm</keyword>
<keyword id="KW-0342">GTP-binding</keyword>
<keyword id="KW-0460">Magnesium</keyword>
<keyword id="KW-0479">Metal-binding</keyword>
<keyword id="KW-0547">Nucleotide-binding</keyword>
<keyword id="KW-0548">Nucleotidyltransferase</keyword>
<keyword id="KW-1185">Reference proteome</keyword>
<keyword id="KW-0808">Transferase</keyword>
<accession>Q8BTZ7</accession>
<reference key="1">
    <citation type="journal article" date="2005" name="Science">
        <title>The transcriptional landscape of the mammalian genome.</title>
        <authorList>
            <person name="Carninci P."/>
            <person name="Kasukawa T."/>
            <person name="Katayama S."/>
            <person name="Gough J."/>
            <person name="Frith M.C."/>
            <person name="Maeda N."/>
            <person name="Oyama R."/>
            <person name="Ravasi T."/>
            <person name="Lenhard B."/>
            <person name="Wells C."/>
            <person name="Kodzius R."/>
            <person name="Shimokawa K."/>
            <person name="Bajic V.B."/>
            <person name="Brenner S.E."/>
            <person name="Batalov S."/>
            <person name="Forrest A.R."/>
            <person name="Zavolan M."/>
            <person name="Davis M.J."/>
            <person name="Wilming L.G."/>
            <person name="Aidinis V."/>
            <person name="Allen J.E."/>
            <person name="Ambesi-Impiombato A."/>
            <person name="Apweiler R."/>
            <person name="Aturaliya R.N."/>
            <person name="Bailey T.L."/>
            <person name="Bansal M."/>
            <person name="Baxter L."/>
            <person name="Beisel K.W."/>
            <person name="Bersano T."/>
            <person name="Bono H."/>
            <person name="Chalk A.M."/>
            <person name="Chiu K.P."/>
            <person name="Choudhary V."/>
            <person name="Christoffels A."/>
            <person name="Clutterbuck D.R."/>
            <person name="Crowe M.L."/>
            <person name="Dalla E."/>
            <person name="Dalrymple B.P."/>
            <person name="de Bono B."/>
            <person name="Della Gatta G."/>
            <person name="di Bernardo D."/>
            <person name="Down T."/>
            <person name="Engstrom P."/>
            <person name="Fagiolini M."/>
            <person name="Faulkner G."/>
            <person name="Fletcher C.F."/>
            <person name="Fukushima T."/>
            <person name="Furuno M."/>
            <person name="Futaki S."/>
            <person name="Gariboldi M."/>
            <person name="Georgii-Hemming P."/>
            <person name="Gingeras T.R."/>
            <person name="Gojobori T."/>
            <person name="Green R.E."/>
            <person name="Gustincich S."/>
            <person name="Harbers M."/>
            <person name="Hayashi Y."/>
            <person name="Hensch T.K."/>
            <person name="Hirokawa N."/>
            <person name="Hill D."/>
            <person name="Huminiecki L."/>
            <person name="Iacono M."/>
            <person name="Ikeo K."/>
            <person name="Iwama A."/>
            <person name="Ishikawa T."/>
            <person name="Jakt M."/>
            <person name="Kanapin A."/>
            <person name="Katoh M."/>
            <person name="Kawasawa Y."/>
            <person name="Kelso J."/>
            <person name="Kitamura H."/>
            <person name="Kitano H."/>
            <person name="Kollias G."/>
            <person name="Krishnan S.P."/>
            <person name="Kruger A."/>
            <person name="Kummerfeld S.K."/>
            <person name="Kurochkin I.V."/>
            <person name="Lareau L.F."/>
            <person name="Lazarevic D."/>
            <person name="Lipovich L."/>
            <person name="Liu J."/>
            <person name="Liuni S."/>
            <person name="McWilliam S."/>
            <person name="Madan Babu M."/>
            <person name="Madera M."/>
            <person name="Marchionni L."/>
            <person name="Matsuda H."/>
            <person name="Matsuzawa S."/>
            <person name="Miki H."/>
            <person name="Mignone F."/>
            <person name="Miyake S."/>
            <person name="Morris K."/>
            <person name="Mottagui-Tabar S."/>
            <person name="Mulder N."/>
            <person name="Nakano N."/>
            <person name="Nakauchi H."/>
            <person name="Ng P."/>
            <person name="Nilsson R."/>
            <person name="Nishiguchi S."/>
            <person name="Nishikawa S."/>
            <person name="Nori F."/>
            <person name="Ohara O."/>
            <person name="Okazaki Y."/>
            <person name="Orlando V."/>
            <person name="Pang K.C."/>
            <person name="Pavan W.J."/>
            <person name="Pavesi G."/>
            <person name="Pesole G."/>
            <person name="Petrovsky N."/>
            <person name="Piazza S."/>
            <person name="Reed J."/>
            <person name="Reid J.F."/>
            <person name="Ring B.Z."/>
            <person name="Ringwald M."/>
            <person name="Rost B."/>
            <person name="Ruan Y."/>
            <person name="Salzberg S.L."/>
            <person name="Sandelin A."/>
            <person name="Schneider C."/>
            <person name="Schoenbach C."/>
            <person name="Sekiguchi K."/>
            <person name="Semple C.A."/>
            <person name="Seno S."/>
            <person name="Sessa L."/>
            <person name="Sheng Y."/>
            <person name="Shibata Y."/>
            <person name="Shimada H."/>
            <person name="Shimada K."/>
            <person name="Silva D."/>
            <person name="Sinclair B."/>
            <person name="Sperling S."/>
            <person name="Stupka E."/>
            <person name="Sugiura K."/>
            <person name="Sultana R."/>
            <person name="Takenaka Y."/>
            <person name="Taki K."/>
            <person name="Tammoja K."/>
            <person name="Tan S.L."/>
            <person name="Tang S."/>
            <person name="Taylor M.S."/>
            <person name="Tegner J."/>
            <person name="Teichmann S.A."/>
            <person name="Ueda H.R."/>
            <person name="van Nimwegen E."/>
            <person name="Verardo R."/>
            <person name="Wei C.L."/>
            <person name="Yagi K."/>
            <person name="Yamanishi H."/>
            <person name="Zabarovsky E."/>
            <person name="Zhu S."/>
            <person name="Zimmer A."/>
            <person name="Hide W."/>
            <person name="Bult C."/>
            <person name="Grimmond S.M."/>
            <person name="Teasdale R.D."/>
            <person name="Liu E.T."/>
            <person name="Brusic V."/>
            <person name="Quackenbush J."/>
            <person name="Wahlestedt C."/>
            <person name="Mattick J.S."/>
            <person name="Hume D.A."/>
            <person name="Kai C."/>
            <person name="Sasaki D."/>
            <person name="Tomaru Y."/>
            <person name="Fukuda S."/>
            <person name="Kanamori-Katayama M."/>
            <person name="Suzuki M."/>
            <person name="Aoki J."/>
            <person name="Arakawa T."/>
            <person name="Iida J."/>
            <person name="Imamura K."/>
            <person name="Itoh M."/>
            <person name="Kato T."/>
            <person name="Kawaji H."/>
            <person name="Kawagashira N."/>
            <person name="Kawashima T."/>
            <person name="Kojima M."/>
            <person name="Kondo S."/>
            <person name="Konno H."/>
            <person name="Nakano K."/>
            <person name="Ninomiya N."/>
            <person name="Nishio T."/>
            <person name="Okada M."/>
            <person name="Plessy C."/>
            <person name="Shibata K."/>
            <person name="Shiraki T."/>
            <person name="Suzuki S."/>
            <person name="Tagami M."/>
            <person name="Waki K."/>
            <person name="Watahiki A."/>
            <person name="Okamura-Oho Y."/>
            <person name="Suzuki H."/>
            <person name="Kawai J."/>
            <person name="Hayashizaki Y."/>
        </authorList>
    </citation>
    <scope>NUCLEOTIDE SEQUENCE [LARGE SCALE MRNA]</scope>
    <source>
        <strain>C57BL/6J</strain>
        <strain>NOD</strain>
        <tissue>Inner ear</tissue>
        <tissue>Thymus</tissue>
    </source>
</reference>
<reference key="2">
    <citation type="journal article" date="2004" name="Genome Res.">
        <title>The status, quality, and expansion of the NIH full-length cDNA project: the Mammalian Gene Collection (MGC).</title>
        <authorList>
            <consortium name="The MGC Project Team"/>
        </authorList>
    </citation>
    <scope>NUCLEOTIDE SEQUENCE [LARGE SCALE MRNA]</scope>
    <source>
        <tissue>Pituitary</tissue>
    </source>
</reference>
<reference key="3">
    <citation type="journal article" date="2010" name="Cell">
        <title>A tissue-specific atlas of mouse protein phosphorylation and expression.</title>
        <authorList>
            <person name="Huttlin E.L."/>
            <person name="Jedrychowski M.P."/>
            <person name="Elias J.E."/>
            <person name="Goswami T."/>
            <person name="Rad R."/>
            <person name="Beausoleil S.A."/>
            <person name="Villen J."/>
            <person name="Haas W."/>
            <person name="Sowa M.E."/>
            <person name="Gygi S.P."/>
        </authorList>
    </citation>
    <scope>IDENTIFICATION BY MASS SPECTROMETRY [LARGE SCALE ANALYSIS]</scope>
    <source>
        <tissue>Brain</tissue>
        <tissue>Brown adipose tissue</tissue>
        <tissue>Heart</tissue>
        <tissue>Kidney</tissue>
        <tissue>Liver</tissue>
        <tissue>Lung</tissue>
        <tissue>Pancreas</tissue>
        <tissue>Spleen</tissue>
        <tissue>Testis</tissue>
    </source>
</reference>
<proteinExistence type="evidence at protein level"/>
<organism evidence="5">
    <name type="scientific">Mus musculus</name>
    <name type="common">Mouse</name>
    <dbReference type="NCBI Taxonomy" id="10090"/>
    <lineage>
        <taxon>Eukaryota</taxon>
        <taxon>Metazoa</taxon>
        <taxon>Chordata</taxon>
        <taxon>Craniata</taxon>
        <taxon>Vertebrata</taxon>
        <taxon>Euteleostomi</taxon>
        <taxon>Mammalia</taxon>
        <taxon>Eutheria</taxon>
        <taxon>Euarchontoglires</taxon>
        <taxon>Glires</taxon>
        <taxon>Rodentia</taxon>
        <taxon>Myomorpha</taxon>
        <taxon>Muroidea</taxon>
        <taxon>Muridae</taxon>
        <taxon>Murinae</taxon>
        <taxon>Mus</taxon>
        <taxon>Mus</taxon>
    </lineage>
</organism>
<comment type="function">
    <text evidence="1 2">Catalytic subunit of the GMPPA-GMPPB mannose-1-phosphate guanylyltransferase complex (By similarity). Catalyzes the formation of GDP-mannose, an essential precursor of glycan moieties of glycoproteins and glycolipids (By similarity). Can catalyze the reverse reaction in vitro (By similarity). Together with GMPPA regulates GDP-alpha-D-mannose levels (By similarity).</text>
</comment>
<comment type="catalytic activity">
    <reaction evidence="1">
        <text>alpha-D-mannose 1-phosphate + GTP + H(+) = GDP-alpha-D-mannose + diphosphate</text>
        <dbReference type="Rhea" id="RHEA:15229"/>
        <dbReference type="ChEBI" id="CHEBI:15378"/>
        <dbReference type="ChEBI" id="CHEBI:33019"/>
        <dbReference type="ChEBI" id="CHEBI:37565"/>
        <dbReference type="ChEBI" id="CHEBI:57527"/>
        <dbReference type="ChEBI" id="CHEBI:58409"/>
        <dbReference type="EC" id="2.7.7.13"/>
    </reaction>
    <physiologicalReaction direction="left-to-right" evidence="2">
        <dbReference type="Rhea" id="RHEA:15230"/>
    </physiologicalReaction>
    <physiologicalReaction direction="right-to-left" evidence="2">
        <dbReference type="Rhea" id="RHEA:15231"/>
    </physiologicalReaction>
</comment>
<comment type="cofactor">
    <cofactor evidence="2">
        <name>Mg(2+)</name>
        <dbReference type="ChEBI" id="CHEBI:18420"/>
    </cofactor>
    <text evidence="2">Coordinates binding with substrate and required for enzymatic activity.</text>
</comment>
<comment type="activity regulation">
    <text evidence="2">Enzyme activity is reduced by incorporation into the GMPPA-GMPPB mannose-1-phosphate guanylyltransferase complex. Allosterically inhibited, when part of the GMPPA-GMPPB complex, by GDP-alpha-D-mannose binding to GMPPA.</text>
</comment>
<comment type="pathway">
    <text evidence="1">Nucleotide-sugar biosynthesis; GDP-alpha-D-mannose biosynthesis; GDP-alpha-D-mannose from alpha-D-mannose 1-phosphate (GTP route): step 1/1.</text>
</comment>
<comment type="subunit">
    <text evidence="2">Component of the GMPPA-GMPPB mannose-1-phosphate guanylyltransferase complex composed of 4 GMPPA subunits and 8 GMPPB subunits; the complex is organized into three layers, a central layer made up of 2 GMPPA dimers sandwiched between two layers each made up of 2 GMPPB dimers (By similarity). GMPPB catalytic activity is reduced when part of the complex and binding of GDP-alpha-D-Mannose by GMPPA induces allosteric feedback inhibition of GMPPB (By similarity).</text>
</comment>
<comment type="subcellular location">
    <subcellularLocation>
        <location evidence="2">Cytoplasm</location>
    </subcellularLocation>
</comment>
<comment type="domain">
    <text evidence="2">The N-terminal substrate-binding domain adopts a Rossman-like fold and has a binding pocket for GTP or GDP-alpha-D-mannose (By similarity). Substrate binding is coordinated by an Mg(2+) ion (By similarity).</text>
</comment>
<comment type="domain">
    <text evidence="2">The C-terminal domain consists of a series of tandem hexapeptide repeats that adopt a beta-helix conformation (By similarity). The beta-helix forms several protein interaction surfaces involved in assembly of the GMPPA-GMPPB mannose-1-phosphate guanylyltransferase complex (By similarity).</text>
</comment>
<comment type="similarity">
    <text evidence="3">Belongs to the transferase hexapeptide repeat family.</text>
</comment>
<name>GMPPB_MOUSE</name>
<dbReference type="EC" id="2.7.7.13" evidence="1"/>
<dbReference type="EMBL" id="AK088295">
    <property type="protein sequence ID" value="BAC40266.1"/>
    <property type="molecule type" value="mRNA"/>
</dbReference>
<dbReference type="EMBL" id="AK148125">
    <property type="protein sequence ID" value="BAE28361.1"/>
    <property type="molecule type" value="mRNA"/>
</dbReference>
<dbReference type="EMBL" id="AK158470">
    <property type="protein sequence ID" value="BAE34527.1"/>
    <property type="molecule type" value="mRNA"/>
</dbReference>
<dbReference type="EMBL" id="BC061207">
    <property type="protein sequence ID" value="AAH61207.1"/>
    <property type="molecule type" value="mRNA"/>
</dbReference>
<dbReference type="CCDS" id="CCDS23515.1"/>
<dbReference type="RefSeq" id="NP_001344611.1">
    <property type="nucleotide sequence ID" value="NM_001357682.2"/>
</dbReference>
<dbReference type="RefSeq" id="NP_001397558.1">
    <property type="nucleotide sequence ID" value="NM_001410629.1"/>
</dbReference>
<dbReference type="RefSeq" id="NP_808578.1">
    <property type="nucleotide sequence ID" value="NM_177910.5"/>
</dbReference>
<dbReference type="RefSeq" id="XP_006511822.1">
    <property type="nucleotide sequence ID" value="XM_006511759.3"/>
</dbReference>
<dbReference type="SMR" id="Q8BTZ7"/>
<dbReference type="BioGRID" id="237067">
    <property type="interactions" value="7"/>
</dbReference>
<dbReference type="FunCoup" id="Q8BTZ7">
    <property type="interactions" value="2335"/>
</dbReference>
<dbReference type="IntAct" id="Q8BTZ7">
    <property type="interactions" value="1"/>
</dbReference>
<dbReference type="STRING" id="10090.ENSMUSP00000107914"/>
<dbReference type="PhosphoSitePlus" id="Q8BTZ7"/>
<dbReference type="SwissPalm" id="Q8BTZ7"/>
<dbReference type="REPRODUCTION-2DPAGE" id="Q8BTZ7"/>
<dbReference type="jPOST" id="Q8BTZ7"/>
<dbReference type="PaxDb" id="10090-ENSMUSP00000107914"/>
<dbReference type="PeptideAtlas" id="Q8BTZ7"/>
<dbReference type="ProteomicsDB" id="271408"/>
<dbReference type="Pumba" id="Q8BTZ7"/>
<dbReference type="Antibodypedia" id="1597">
    <property type="antibodies" value="170 antibodies from 25 providers"/>
</dbReference>
<dbReference type="DNASU" id="331026"/>
<dbReference type="Ensembl" id="ENSMUST00000047947.9">
    <property type="protein sequence ID" value="ENSMUSP00000036898.8"/>
    <property type="gene ID" value="ENSMUSG00000070284.11"/>
</dbReference>
<dbReference type="Ensembl" id="ENSMUST00000112295.9">
    <property type="protein sequence ID" value="ENSMUSP00000107914.3"/>
    <property type="gene ID" value="ENSMUSG00000070284.11"/>
</dbReference>
<dbReference type="GeneID" id="331026"/>
<dbReference type="KEGG" id="mmu:331026"/>
<dbReference type="UCSC" id="uc009rog.1">
    <property type="organism name" value="mouse"/>
</dbReference>
<dbReference type="AGR" id="MGI:2660880"/>
<dbReference type="CTD" id="29925"/>
<dbReference type="MGI" id="MGI:2660880">
    <property type="gene designation" value="Gmppb"/>
</dbReference>
<dbReference type="VEuPathDB" id="HostDB:ENSMUSG00000070284"/>
<dbReference type="eggNOG" id="KOG1322">
    <property type="taxonomic scope" value="Eukaryota"/>
</dbReference>
<dbReference type="GeneTree" id="ENSGT00940000158909"/>
<dbReference type="HOGENOM" id="CLU_029499_0_0_1"/>
<dbReference type="InParanoid" id="Q8BTZ7"/>
<dbReference type="OMA" id="GPNCWIC"/>
<dbReference type="OrthoDB" id="1733332at2759"/>
<dbReference type="PhylomeDB" id="Q8BTZ7"/>
<dbReference type="TreeFam" id="TF300718"/>
<dbReference type="Reactome" id="R-MMU-446205">
    <property type="pathway name" value="Synthesis of GDP-mannose"/>
</dbReference>
<dbReference type="UniPathway" id="UPA00126">
    <property type="reaction ID" value="UER00930"/>
</dbReference>
<dbReference type="BioGRID-ORCS" id="331026">
    <property type="hits" value="25 hits in 77 CRISPR screens"/>
</dbReference>
<dbReference type="ChiTaRS" id="Gmppb">
    <property type="organism name" value="mouse"/>
</dbReference>
<dbReference type="PRO" id="PR:Q8BTZ7"/>
<dbReference type="Proteomes" id="UP000000589">
    <property type="component" value="Chromosome 9"/>
</dbReference>
<dbReference type="RNAct" id="Q8BTZ7">
    <property type="molecule type" value="protein"/>
</dbReference>
<dbReference type="Bgee" id="ENSMUSG00000070284">
    <property type="expression patterns" value="Expressed in epithelium of small intestine and 139 other cell types or tissues"/>
</dbReference>
<dbReference type="GO" id="GO:0005737">
    <property type="term" value="C:cytoplasm"/>
    <property type="evidence" value="ECO:0000250"/>
    <property type="project" value="UniProtKB"/>
</dbReference>
<dbReference type="GO" id="GO:0005829">
    <property type="term" value="C:cytosol"/>
    <property type="evidence" value="ECO:0000314"/>
    <property type="project" value="MGI"/>
</dbReference>
<dbReference type="GO" id="GO:0120508">
    <property type="term" value="C:GDP-mannose pyrophosphorylase complex"/>
    <property type="evidence" value="ECO:0000250"/>
    <property type="project" value="FlyBase"/>
</dbReference>
<dbReference type="GO" id="GO:0005739">
    <property type="term" value="C:mitochondrion"/>
    <property type="evidence" value="ECO:0007005"/>
    <property type="project" value="MGI"/>
</dbReference>
<dbReference type="GO" id="GO:0005525">
    <property type="term" value="F:GTP binding"/>
    <property type="evidence" value="ECO:0007669"/>
    <property type="project" value="UniProtKB-KW"/>
</dbReference>
<dbReference type="GO" id="GO:0004475">
    <property type="term" value="F:mannose-1-phosphate guanylyltransferase (GTP) activity"/>
    <property type="evidence" value="ECO:0000266"/>
    <property type="project" value="MGI"/>
</dbReference>
<dbReference type="GO" id="GO:0046872">
    <property type="term" value="F:metal ion binding"/>
    <property type="evidence" value="ECO:0007669"/>
    <property type="project" value="UniProtKB-KW"/>
</dbReference>
<dbReference type="GO" id="GO:0009298">
    <property type="term" value="P:GDP-mannose biosynthetic process"/>
    <property type="evidence" value="ECO:0000315"/>
    <property type="project" value="MGI"/>
</dbReference>
<dbReference type="GO" id="GO:0061728">
    <property type="term" value="P:GDP-mannose biosynthetic process from mannose"/>
    <property type="evidence" value="ECO:0000315"/>
    <property type="project" value="MGI"/>
</dbReference>
<dbReference type="CDD" id="cd06425">
    <property type="entry name" value="M1P_guanylylT_B_like_N"/>
    <property type="match status" value="1"/>
</dbReference>
<dbReference type="FunFam" id="2.160.10.10:FF:000018">
    <property type="entry name" value="Mannose-1-phosphate guanyltransferase beta"/>
    <property type="match status" value="1"/>
</dbReference>
<dbReference type="FunFam" id="3.90.550.10:FF:000013">
    <property type="entry name" value="mannose-1-phosphate guanyltransferase beta"/>
    <property type="match status" value="1"/>
</dbReference>
<dbReference type="Gene3D" id="2.160.10.10">
    <property type="entry name" value="Hexapeptide repeat proteins"/>
    <property type="match status" value="1"/>
</dbReference>
<dbReference type="Gene3D" id="3.90.550.10">
    <property type="entry name" value="Spore Coat Polysaccharide Biosynthesis Protein SpsA, Chain A"/>
    <property type="match status" value="1"/>
</dbReference>
<dbReference type="InterPro" id="IPR056729">
    <property type="entry name" value="GMPPB_C"/>
</dbReference>
<dbReference type="InterPro" id="IPR045233">
    <property type="entry name" value="GMPPB_N"/>
</dbReference>
<dbReference type="InterPro" id="IPR018357">
    <property type="entry name" value="Hexapep_transf_CS"/>
</dbReference>
<dbReference type="InterPro" id="IPR050486">
    <property type="entry name" value="Mannose-1P_guanyltransferase"/>
</dbReference>
<dbReference type="InterPro" id="IPR005835">
    <property type="entry name" value="NTP_transferase_dom"/>
</dbReference>
<dbReference type="InterPro" id="IPR029044">
    <property type="entry name" value="Nucleotide-diphossugar_trans"/>
</dbReference>
<dbReference type="PANTHER" id="PTHR22572">
    <property type="entry name" value="SUGAR-1-PHOSPHATE GUANYL TRANSFERASE"/>
    <property type="match status" value="1"/>
</dbReference>
<dbReference type="Pfam" id="PF25087">
    <property type="entry name" value="GMPPB_C"/>
    <property type="match status" value="1"/>
</dbReference>
<dbReference type="Pfam" id="PF00483">
    <property type="entry name" value="NTP_transferase"/>
    <property type="match status" value="1"/>
</dbReference>
<dbReference type="SUPFAM" id="SSF53448">
    <property type="entry name" value="Nucleotide-diphospho-sugar transferases"/>
    <property type="match status" value="1"/>
</dbReference>
<dbReference type="PROSITE" id="PS00101">
    <property type="entry name" value="HEXAPEP_TRANSFERASES"/>
    <property type="match status" value="1"/>
</dbReference>
<feature type="chain" id="PRO_0000307163" description="Mannose-1-phosphate guanylyltransferase catalytic subunit beta">
    <location>
        <begin position="1"/>
        <end position="360"/>
    </location>
</feature>
<feature type="region of interest" description="Substrate-binding domain" evidence="2">
    <location>
        <begin position="2"/>
        <end position="222"/>
    </location>
</feature>
<feature type="region of interest" description="Hexapeptide repeat domain" evidence="2">
    <location>
        <begin position="245"/>
        <end position="360"/>
    </location>
</feature>
<feature type="active site" evidence="2">
    <location>
        <position position="162"/>
    </location>
</feature>
<feature type="binding site" evidence="2">
    <location>
        <position position="110"/>
    </location>
    <ligand>
        <name>GDP-alpha-D-mannose</name>
        <dbReference type="ChEBI" id="CHEBI:57527"/>
    </ligand>
</feature>
<feature type="binding site" evidence="2">
    <location>
        <position position="110"/>
    </location>
    <ligand>
        <name>Mg(2+)</name>
        <dbReference type="ChEBI" id="CHEBI:18420"/>
    </ligand>
</feature>
<feature type="binding site" evidence="2">
    <location>
        <position position="218"/>
    </location>
    <ligand>
        <name>GDP-alpha-D-mannose</name>
        <dbReference type="ChEBI" id="CHEBI:57527"/>
    </ligand>
</feature>
<gene>
    <name evidence="4" type="primary">Gmppb</name>
</gene>
<protein>
    <recommendedName>
        <fullName evidence="3">Mannose-1-phosphate guanylyltransferase catalytic subunit beta</fullName>
        <ecNumber evidence="1">2.7.7.13</ecNumber>
    </recommendedName>
    <alternativeName>
        <fullName>GDP-mannose pyrophosphorylase B</fullName>
    </alternativeName>
    <alternativeName>
        <fullName>GTP-mannose-1-phosphate guanylyltransferase beta</fullName>
    </alternativeName>
</protein>
<sequence>MKALILVGGYGTRLRPLTLSTPKPLVDFCNKPILLHQVEALAAAGVDHVILAVSYMSQMLEKEMKAQEQRLGIRISMSHEEEPLGTAGPLALARDLLSETADPFFVLNSDVICDFPFQAMVQFHRHHGQEGSILVTKVEEPSKYGVVVCEADTGRIHRFVEKPQVFVSNKINAGMYILSPAVLQRIQLKPTSIEKEIFPVMAKEGQLYAMELQGFWMDIGQPKDFLTGMCLFLQSLRQKHPERLYSGPGIVGNVLVDPSARIGQNCSIGPNVSLGPGVVVEDGVCIRRCTVLRDAHIRSHSWLESCIVGWRCRVGQWVRMENVTVLGEDVIVNDELYLNGASVLPHKSIGESVPEPRIIM</sequence>